<proteinExistence type="inferred from homology"/>
<name>AROC_LACE2</name>
<keyword id="KW-0028">Amino-acid biosynthesis</keyword>
<keyword id="KW-0057">Aromatic amino acid biosynthesis</keyword>
<keyword id="KW-0274">FAD</keyword>
<keyword id="KW-0285">Flavoprotein</keyword>
<keyword id="KW-0288">FMN</keyword>
<keyword id="KW-0456">Lyase</keyword>
<keyword id="KW-0521">NADP</keyword>
<keyword id="KW-1185">Reference proteome</keyword>
<sequence>MAGSVFGNIFKISTWGESHGEGLGVVIDGCPAGLPLCEKDIQEQLDRRKPGQSKFTTPRKEDDEVHILSGVFEGKTTGTPISLAVYNKTQRSADYSEIANYYRPGHADYTFDEKFGFRDYRGGGRSSGRETIGRVAAGAIAMKILKELGINITAYAKEIGGIGIDYDKFDIAERDNNAFNMPDKEAAEKVKAFAESKMSVGDSIGGVIECRVTGMMTGIGNPTFEKLDANLAKAIMSIGAVKGFEIGDGFEAAKVTGKYNNDEFVMKDGRVGKLTNHSGGVLGGISDGDEIVFRAAVKPTPSISALQETVNKQGEDIEVSIKGRHDPMIVPRAVVVVEAMTALTLVDLIFDNMTARMDRVKEFYRK</sequence>
<accession>C4Z562</accession>
<protein>
    <recommendedName>
        <fullName evidence="1">Chorismate synthase</fullName>
        <shortName evidence="1">CS</shortName>
        <ecNumber evidence="1">4.2.3.5</ecNumber>
    </recommendedName>
    <alternativeName>
        <fullName evidence="1">5-enolpyruvylshikimate-3-phosphate phospholyase</fullName>
    </alternativeName>
</protein>
<comment type="function">
    <text evidence="1">Catalyzes the anti-1,4-elimination of the C-3 phosphate and the C-6 proR hydrogen from 5-enolpyruvylshikimate-3-phosphate (EPSP) to yield chorismate, which is the branch point compound that serves as the starting substrate for the three terminal pathways of aromatic amino acid biosynthesis. This reaction introduces a second double bond into the aromatic ring system.</text>
</comment>
<comment type="catalytic activity">
    <reaction evidence="1">
        <text>5-O-(1-carboxyvinyl)-3-phosphoshikimate = chorismate + phosphate</text>
        <dbReference type="Rhea" id="RHEA:21020"/>
        <dbReference type="ChEBI" id="CHEBI:29748"/>
        <dbReference type="ChEBI" id="CHEBI:43474"/>
        <dbReference type="ChEBI" id="CHEBI:57701"/>
        <dbReference type="EC" id="4.2.3.5"/>
    </reaction>
</comment>
<comment type="cofactor">
    <cofactor evidence="1">
        <name>FMNH2</name>
        <dbReference type="ChEBI" id="CHEBI:57618"/>
    </cofactor>
    <text evidence="1">Reduced FMN (FMNH(2)).</text>
</comment>
<comment type="pathway">
    <text evidence="1">Metabolic intermediate biosynthesis; chorismate biosynthesis; chorismate from D-erythrose 4-phosphate and phosphoenolpyruvate: step 7/7.</text>
</comment>
<comment type="subunit">
    <text evidence="1">Homotetramer.</text>
</comment>
<comment type="similarity">
    <text evidence="1">Belongs to the chorismate synthase family.</text>
</comment>
<organism>
    <name type="scientific">Lachnospira eligens (strain ATCC 27750 / DSM 3376 / VPI C15-48 / C15-B4)</name>
    <name type="common">Eubacterium eligens</name>
    <dbReference type="NCBI Taxonomy" id="515620"/>
    <lineage>
        <taxon>Bacteria</taxon>
        <taxon>Bacillati</taxon>
        <taxon>Bacillota</taxon>
        <taxon>Clostridia</taxon>
        <taxon>Lachnospirales</taxon>
        <taxon>Lachnospiraceae</taxon>
        <taxon>Lachnospira</taxon>
    </lineage>
</organism>
<gene>
    <name evidence="1" type="primary">aroC</name>
    <name type="ordered locus">EUBELI_00758</name>
</gene>
<dbReference type="EC" id="4.2.3.5" evidence="1"/>
<dbReference type="EMBL" id="CP001104">
    <property type="protein sequence ID" value="ACR71766.1"/>
    <property type="molecule type" value="Genomic_DNA"/>
</dbReference>
<dbReference type="RefSeq" id="WP_012739002.1">
    <property type="nucleotide sequence ID" value="NC_012778.1"/>
</dbReference>
<dbReference type="SMR" id="C4Z562"/>
<dbReference type="STRING" id="515620.EUBELI_00758"/>
<dbReference type="GeneID" id="41355499"/>
<dbReference type="KEGG" id="eel:EUBELI_00758"/>
<dbReference type="eggNOG" id="COG0082">
    <property type="taxonomic scope" value="Bacteria"/>
</dbReference>
<dbReference type="HOGENOM" id="CLU_034547_0_2_9"/>
<dbReference type="UniPathway" id="UPA00053">
    <property type="reaction ID" value="UER00090"/>
</dbReference>
<dbReference type="Proteomes" id="UP000001476">
    <property type="component" value="Chromosome"/>
</dbReference>
<dbReference type="GO" id="GO:0005829">
    <property type="term" value="C:cytosol"/>
    <property type="evidence" value="ECO:0007669"/>
    <property type="project" value="TreeGrafter"/>
</dbReference>
<dbReference type="GO" id="GO:0004107">
    <property type="term" value="F:chorismate synthase activity"/>
    <property type="evidence" value="ECO:0007669"/>
    <property type="project" value="UniProtKB-UniRule"/>
</dbReference>
<dbReference type="GO" id="GO:0010181">
    <property type="term" value="F:FMN binding"/>
    <property type="evidence" value="ECO:0007669"/>
    <property type="project" value="TreeGrafter"/>
</dbReference>
<dbReference type="GO" id="GO:0008652">
    <property type="term" value="P:amino acid biosynthetic process"/>
    <property type="evidence" value="ECO:0007669"/>
    <property type="project" value="UniProtKB-KW"/>
</dbReference>
<dbReference type="GO" id="GO:0009073">
    <property type="term" value="P:aromatic amino acid family biosynthetic process"/>
    <property type="evidence" value="ECO:0007669"/>
    <property type="project" value="UniProtKB-KW"/>
</dbReference>
<dbReference type="GO" id="GO:0009423">
    <property type="term" value="P:chorismate biosynthetic process"/>
    <property type="evidence" value="ECO:0007669"/>
    <property type="project" value="UniProtKB-UniRule"/>
</dbReference>
<dbReference type="CDD" id="cd07304">
    <property type="entry name" value="Chorismate_synthase"/>
    <property type="match status" value="1"/>
</dbReference>
<dbReference type="Gene3D" id="3.60.150.10">
    <property type="entry name" value="Chorismate synthase AroC"/>
    <property type="match status" value="1"/>
</dbReference>
<dbReference type="HAMAP" id="MF_00300">
    <property type="entry name" value="Chorismate_synth"/>
    <property type="match status" value="1"/>
</dbReference>
<dbReference type="InterPro" id="IPR000453">
    <property type="entry name" value="Chorismate_synth"/>
</dbReference>
<dbReference type="InterPro" id="IPR035904">
    <property type="entry name" value="Chorismate_synth_AroC_sf"/>
</dbReference>
<dbReference type="InterPro" id="IPR020541">
    <property type="entry name" value="Chorismate_synthase_CS"/>
</dbReference>
<dbReference type="NCBIfam" id="TIGR00033">
    <property type="entry name" value="aroC"/>
    <property type="match status" value="1"/>
</dbReference>
<dbReference type="NCBIfam" id="NF003793">
    <property type="entry name" value="PRK05382.1"/>
    <property type="match status" value="1"/>
</dbReference>
<dbReference type="PANTHER" id="PTHR21085">
    <property type="entry name" value="CHORISMATE SYNTHASE"/>
    <property type="match status" value="1"/>
</dbReference>
<dbReference type="PANTHER" id="PTHR21085:SF0">
    <property type="entry name" value="CHORISMATE SYNTHASE"/>
    <property type="match status" value="1"/>
</dbReference>
<dbReference type="Pfam" id="PF01264">
    <property type="entry name" value="Chorismate_synt"/>
    <property type="match status" value="1"/>
</dbReference>
<dbReference type="PIRSF" id="PIRSF001456">
    <property type="entry name" value="Chorismate_synth"/>
    <property type="match status" value="1"/>
</dbReference>
<dbReference type="SUPFAM" id="SSF103263">
    <property type="entry name" value="Chorismate synthase, AroC"/>
    <property type="match status" value="1"/>
</dbReference>
<dbReference type="PROSITE" id="PS00787">
    <property type="entry name" value="CHORISMATE_SYNTHASE_1"/>
    <property type="match status" value="1"/>
</dbReference>
<dbReference type="PROSITE" id="PS00788">
    <property type="entry name" value="CHORISMATE_SYNTHASE_2"/>
    <property type="match status" value="1"/>
</dbReference>
<evidence type="ECO:0000255" key="1">
    <source>
        <dbReference type="HAMAP-Rule" id="MF_00300"/>
    </source>
</evidence>
<feature type="chain" id="PRO_1000204949" description="Chorismate synthase">
    <location>
        <begin position="1"/>
        <end position="366"/>
    </location>
</feature>
<feature type="binding site" evidence="1">
    <location>
        <position position="48"/>
    </location>
    <ligand>
        <name>NADP(+)</name>
        <dbReference type="ChEBI" id="CHEBI:58349"/>
    </ligand>
</feature>
<feature type="binding site" evidence="1">
    <location>
        <begin position="125"/>
        <end position="127"/>
    </location>
    <ligand>
        <name>FMN</name>
        <dbReference type="ChEBI" id="CHEBI:58210"/>
    </ligand>
</feature>
<feature type="binding site" evidence="1">
    <location>
        <position position="283"/>
    </location>
    <ligand>
        <name>FMN</name>
        <dbReference type="ChEBI" id="CHEBI:58210"/>
    </ligand>
</feature>
<feature type="binding site" evidence="1">
    <location>
        <begin position="298"/>
        <end position="302"/>
    </location>
    <ligand>
        <name>FMN</name>
        <dbReference type="ChEBI" id="CHEBI:58210"/>
    </ligand>
</feature>
<feature type="binding site" evidence="1">
    <location>
        <position position="324"/>
    </location>
    <ligand>
        <name>FMN</name>
        <dbReference type="ChEBI" id="CHEBI:58210"/>
    </ligand>
</feature>
<reference key="1">
    <citation type="journal article" date="2009" name="Proc. Natl. Acad. Sci. U.S.A.">
        <title>Characterizing a model human gut microbiota composed of members of its two dominant bacterial phyla.</title>
        <authorList>
            <person name="Mahowald M.A."/>
            <person name="Rey F.E."/>
            <person name="Seedorf H."/>
            <person name="Turnbaugh P.J."/>
            <person name="Fulton R.S."/>
            <person name="Wollam A."/>
            <person name="Shah N."/>
            <person name="Wang C."/>
            <person name="Magrini V."/>
            <person name="Wilson R.K."/>
            <person name="Cantarel B.L."/>
            <person name="Coutinho P.M."/>
            <person name="Henrissat B."/>
            <person name="Crock L.W."/>
            <person name="Russell A."/>
            <person name="Verberkmoes N.C."/>
            <person name="Hettich R.L."/>
            <person name="Gordon J.I."/>
        </authorList>
    </citation>
    <scope>NUCLEOTIDE SEQUENCE [LARGE SCALE GENOMIC DNA]</scope>
    <source>
        <strain>ATCC 27750 / DSM 3376 / VPI C15-48 / C15-B4</strain>
    </source>
</reference>